<proteinExistence type="evidence at protein level"/>
<organism>
    <name type="scientific">Homo sapiens</name>
    <name type="common">Human</name>
    <dbReference type="NCBI Taxonomy" id="9606"/>
    <lineage>
        <taxon>Eukaryota</taxon>
        <taxon>Metazoa</taxon>
        <taxon>Chordata</taxon>
        <taxon>Craniata</taxon>
        <taxon>Vertebrata</taxon>
        <taxon>Euteleostomi</taxon>
        <taxon>Mammalia</taxon>
        <taxon>Eutheria</taxon>
        <taxon>Euarchontoglires</taxon>
        <taxon>Primates</taxon>
        <taxon>Haplorrhini</taxon>
        <taxon>Catarrhini</taxon>
        <taxon>Hominidae</taxon>
        <taxon>Homo</taxon>
    </lineage>
</organism>
<keyword id="KW-0175">Coiled coil</keyword>
<keyword id="KW-0597">Phosphoprotein</keyword>
<keyword id="KW-1267">Proteomics identification</keyword>
<keyword id="KW-1185">Reference proteome</keyword>
<keyword id="KW-0677">Repeat</keyword>
<keyword id="KW-0802">TPR repeat</keyword>
<gene>
    <name type="primary">RGPD3</name>
    <name type="synonym">RGP3</name>
</gene>
<evidence type="ECO:0000250" key="1">
    <source>
        <dbReference type="UniProtKB" id="Q99666"/>
    </source>
</evidence>
<evidence type="ECO:0000255" key="2"/>
<evidence type="ECO:0000255" key="3">
    <source>
        <dbReference type="PROSITE-ProRule" id="PRU00164"/>
    </source>
</evidence>
<evidence type="ECO:0000255" key="4">
    <source>
        <dbReference type="PROSITE-ProRule" id="PRU00250"/>
    </source>
</evidence>
<evidence type="ECO:0000256" key="5">
    <source>
        <dbReference type="SAM" id="MobiDB-lite"/>
    </source>
</evidence>
<accession>A6NKT7</accession>
<accession>B8ZZM4</accession>
<name>RGPD3_HUMAN</name>
<dbReference type="EMBL" id="AC097527">
    <property type="status" value="NOT_ANNOTATED_CDS"/>
    <property type="molecule type" value="Genomic_DNA"/>
</dbReference>
<dbReference type="EMBL" id="AC114755">
    <property type="status" value="NOT_ANNOTATED_CDS"/>
    <property type="molecule type" value="Genomic_DNA"/>
</dbReference>
<dbReference type="CCDS" id="CCDS46379.1"/>
<dbReference type="RefSeq" id="NP_001137485.1">
    <property type="nucleotide sequence ID" value="NM_001144013.2"/>
</dbReference>
<dbReference type="SMR" id="A6NKT7"/>
<dbReference type="BioGRID" id="575821">
    <property type="interactions" value="61"/>
</dbReference>
<dbReference type="FunCoup" id="A6NKT7">
    <property type="interactions" value="323"/>
</dbReference>
<dbReference type="IntAct" id="A6NKT7">
    <property type="interactions" value="22"/>
</dbReference>
<dbReference type="MINT" id="A6NKT7"/>
<dbReference type="STRING" id="9606.ENSP00000386588"/>
<dbReference type="GlyGen" id="A6NKT7">
    <property type="glycosylation" value="2 sites, 1 O-linked glycan (2 sites)"/>
</dbReference>
<dbReference type="iPTMnet" id="A6NKT7"/>
<dbReference type="PhosphoSitePlus" id="A6NKT7"/>
<dbReference type="BioMuta" id="RGPD3"/>
<dbReference type="jPOST" id="A6NKT7"/>
<dbReference type="MassIVE" id="A6NKT7"/>
<dbReference type="PaxDb" id="9606-ENSP00000386588"/>
<dbReference type="PeptideAtlas" id="A6NKT7"/>
<dbReference type="ProteomicsDB" id="1430"/>
<dbReference type="Pumba" id="A6NKT7"/>
<dbReference type="DNASU" id="653489"/>
<dbReference type="Ensembl" id="ENST00000409886.4">
    <property type="protein sequence ID" value="ENSP00000386588.4"/>
    <property type="gene ID" value="ENSG00000153165.19"/>
</dbReference>
<dbReference type="GeneID" id="653489"/>
<dbReference type="KEGG" id="hsa:653489"/>
<dbReference type="MANE-Select" id="ENST00000409886.4">
    <property type="protein sequence ID" value="ENSP00000386588.4"/>
    <property type="RefSeq nucleotide sequence ID" value="NM_001144013.2"/>
    <property type="RefSeq protein sequence ID" value="NP_001137485.1"/>
</dbReference>
<dbReference type="UCSC" id="uc010ywi.2">
    <property type="organism name" value="human"/>
</dbReference>
<dbReference type="AGR" id="HGNC:32416"/>
<dbReference type="CTD" id="653489"/>
<dbReference type="GeneCards" id="RGPD3"/>
<dbReference type="HGNC" id="HGNC:32416">
    <property type="gene designation" value="RGPD3"/>
</dbReference>
<dbReference type="HPA" id="ENSG00000153165">
    <property type="expression patterns" value="Group enriched (lymphoid tissue, testis)"/>
</dbReference>
<dbReference type="MIM" id="612706">
    <property type="type" value="gene"/>
</dbReference>
<dbReference type="neXtProt" id="NX_A6NKT7"/>
<dbReference type="PharmGKB" id="PA142671072"/>
<dbReference type="VEuPathDB" id="HostDB:ENSG00000153165"/>
<dbReference type="eggNOG" id="KOG0864">
    <property type="taxonomic scope" value="Eukaryota"/>
</dbReference>
<dbReference type="GeneTree" id="ENSGT00940000164065"/>
<dbReference type="HOGENOM" id="CLU_004100_0_0_1"/>
<dbReference type="InParanoid" id="A6NKT7"/>
<dbReference type="OrthoDB" id="9523654at2759"/>
<dbReference type="PAN-GO" id="A6NKT7">
    <property type="GO annotations" value="4 GO annotations based on evolutionary models"/>
</dbReference>
<dbReference type="PhylomeDB" id="A6NKT7"/>
<dbReference type="TreeFam" id="TF314797"/>
<dbReference type="PathwayCommons" id="A6NKT7"/>
<dbReference type="SignaLink" id="A6NKT7"/>
<dbReference type="BioGRID-ORCS" id="653489">
    <property type="hits" value="15 hits in 692 CRISPR screens"/>
</dbReference>
<dbReference type="CD-CODE" id="DEE660B4">
    <property type="entry name" value="Stress granule"/>
</dbReference>
<dbReference type="ChiTaRS" id="RGPD3">
    <property type="organism name" value="human"/>
</dbReference>
<dbReference type="GenomeRNAi" id="653489"/>
<dbReference type="Pharos" id="A6NKT7">
    <property type="development level" value="Tdark"/>
</dbReference>
<dbReference type="PRO" id="PR:A6NKT7"/>
<dbReference type="Proteomes" id="UP000005640">
    <property type="component" value="Chromosome 2"/>
</dbReference>
<dbReference type="RNAct" id="A6NKT7">
    <property type="molecule type" value="protein"/>
</dbReference>
<dbReference type="Bgee" id="ENSG00000153165">
    <property type="expression patterns" value="Expressed in male germ line stem cell (sensu Vertebrata) in testis and 94 other cell types or tissues"/>
</dbReference>
<dbReference type="ExpressionAtlas" id="A6NKT7">
    <property type="expression patterns" value="baseline and differential"/>
</dbReference>
<dbReference type="GO" id="GO:0005737">
    <property type="term" value="C:cytoplasm"/>
    <property type="evidence" value="ECO:0000318"/>
    <property type="project" value="GO_Central"/>
</dbReference>
<dbReference type="GO" id="GO:0005643">
    <property type="term" value="C:nuclear pore"/>
    <property type="evidence" value="ECO:0000318"/>
    <property type="project" value="GO_Central"/>
</dbReference>
<dbReference type="GO" id="GO:0006607">
    <property type="term" value="P:NLS-bearing protein import into nucleus"/>
    <property type="evidence" value="ECO:0000318"/>
    <property type="project" value="GO_Central"/>
</dbReference>
<dbReference type="CDD" id="cd13177">
    <property type="entry name" value="RanBD2_RanBP2-like"/>
    <property type="match status" value="1"/>
</dbReference>
<dbReference type="CDD" id="cd14685">
    <property type="entry name" value="RanBD3_RanBP2-like"/>
    <property type="match status" value="1"/>
</dbReference>
<dbReference type="FunFam" id="2.30.29.30:FF:000018">
    <property type="entry name" value="E3 SUMO-protein ligase RanBP2"/>
    <property type="match status" value="2"/>
</dbReference>
<dbReference type="FunFam" id="1.25.40.10:FF:000114">
    <property type="entry name" value="E3 SUMO-protein ligase RanBP2 isoform X1"/>
    <property type="match status" value="1"/>
</dbReference>
<dbReference type="FunFam" id="1.10.220.60:FF:000003">
    <property type="entry name" value="GRIP and coiled-coil domain-containing protein 2"/>
    <property type="match status" value="1"/>
</dbReference>
<dbReference type="Gene3D" id="2.30.29.30">
    <property type="entry name" value="Pleckstrin-homology domain (PH domain)/Phosphotyrosine-binding domain (PTB)"/>
    <property type="match status" value="2"/>
</dbReference>
<dbReference type="Gene3D" id="1.25.40.10">
    <property type="entry name" value="Tetratricopeptide repeat domain"/>
    <property type="match status" value="1"/>
</dbReference>
<dbReference type="InterPro" id="IPR032023">
    <property type="entry name" value="GCC2_Rab_bind"/>
</dbReference>
<dbReference type="InterPro" id="IPR000237">
    <property type="entry name" value="GRIP_dom"/>
</dbReference>
<dbReference type="InterPro" id="IPR011993">
    <property type="entry name" value="PH-like_dom_sf"/>
</dbReference>
<dbReference type="InterPro" id="IPR000156">
    <property type="entry name" value="Ran_bind_dom"/>
</dbReference>
<dbReference type="InterPro" id="IPR045255">
    <property type="entry name" value="RanBP1-like"/>
</dbReference>
<dbReference type="InterPro" id="IPR011990">
    <property type="entry name" value="TPR-like_helical_dom_sf"/>
</dbReference>
<dbReference type="InterPro" id="IPR019734">
    <property type="entry name" value="TPR_rpt"/>
</dbReference>
<dbReference type="PANTHER" id="PTHR23138:SF175">
    <property type="entry name" value="E3 SUMO-PROTEIN LIGASE RANBP2-RELATED"/>
    <property type="match status" value="1"/>
</dbReference>
<dbReference type="PANTHER" id="PTHR23138">
    <property type="entry name" value="RAN BINDING PROTEIN"/>
    <property type="match status" value="1"/>
</dbReference>
<dbReference type="Pfam" id="PF01465">
    <property type="entry name" value="GRIP"/>
    <property type="match status" value="1"/>
</dbReference>
<dbReference type="Pfam" id="PF16704">
    <property type="entry name" value="Rab_bind"/>
    <property type="match status" value="1"/>
</dbReference>
<dbReference type="Pfam" id="PF00638">
    <property type="entry name" value="Ran_BP1"/>
    <property type="match status" value="2"/>
</dbReference>
<dbReference type="Pfam" id="PF13181">
    <property type="entry name" value="TPR_8"/>
    <property type="match status" value="1"/>
</dbReference>
<dbReference type="SMART" id="SM00755">
    <property type="entry name" value="Grip"/>
    <property type="match status" value="1"/>
</dbReference>
<dbReference type="SMART" id="SM00160">
    <property type="entry name" value="RanBD"/>
    <property type="match status" value="2"/>
</dbReference>
<dbReference type="SMART" id="SM00028">
    <property type="entry name" value="TPR"/>
    <property type="match status" value="1"/>
</dbReference>
<dbReference type="SUPFAM" id="SSF50729">
    <property type="entry name" value="PH domain-like"/>
    <property type="match status" value="2"/>
</dbReference>
<dbReference type="SUPFAM" id="SSF48452">
    <property type="entry name" value="TPR-like"/>
    <property type="match status" value="1"/>
</dbReference>
<dbReference type="PROSITE" id="PS50913">
    <property type="entry name" value="GRIP"/>
    <property type="match status" value="1"/>
</dbReference>
<dbReference type="PROSITE" id="PS50196">
    <property type="entry name" value="RANBD1"/>
    <property type="match status" value="2"/>
</dbReference>
<dbReference type="PROSITE" id="PS50005">
    <property type="entry name" value="TPR"/>
    <property type="match status" value="1"/>
</dbReference>
<dbReference type="PROSITE" id="PS50293">
    <property type="entry name" value="TPR_REGION"/>
    <property type="match status" value="1"/>
</dbReference>
<comment type="miscellaneous">
    <text>One of the 8 copies of RANBP2 clustered close to the chromosome 2 centromere.</text>
</comment>
<reference key="1">
    <citation type="journal article" date="2005" name="Nature">
        <title>Generation and annotation of the DNA sequences of human chromosomes 2 and 4.</title>
        <authorList>
            <person name="Hillier L.W."/>
            <person name="Graves T.A."/>
            <person name="Fulton R.S."/>
            <person name="Fulton L.A."/>
            <person name="Pepin K.H."/>
            <person name="Minx P."/>
            <person name="Wagner-McPherson C."/>
            <person name="Layman D."/>
            <person name="Wylie K."/>
            <person name="Sekhon M."/>
            <person name="Becker M.C."/>
            <person name="Fewell G.A."/>
            <person name="Delehaunty K.D."/>
            <person name="Miner T.L."/>
            <person name="Nash W.E."/>
            <person name="Kremitzki C."/>
            <person name="Oddy L."/>
            <person name="Du H."/>
            <person name="Sun H."/>
            <person name="Bradshaw-Cordum H."/>
            <person name="Ali J."/>
            <person name="Carter J."/>
            <person name="Cordes M."/>
            <person name="Harris A."/>
            <person name="Isak A."/>
            <person name="van Brunt A."/>
            <person name="Nguyen C."/>
            <person name="Du F."/>
            <person name="Courtney L."/>
            <person name="Kalicki J."/>
            <person name="Ozersky P."/>
            <person name="Abbott S."/>
            <person name="Armstrong J."/>
            <person name="Belter E.A."/>
            <person name="Caruso L."/>
            <person name="Cedroni M."/>
            <person name="Cotton M."/>
            <person name="Davidson T."/>
            <person name="Desai A."/>
            <person name="Elliott G."/>
            <person name="Erb T."/>
            <person name="Fronick C."/>
            <person name="Gaige T."/>
            <person name="Haakenson W."/>
            <person name="Haglund K."/>
            <person name="Holmes A."/>
            <person name="Harkins R."/>
            <person name="Kim K."/>
            <person name="Kruchowski S.S."/>
            <person name="Strong C.M."/>
            <person name="Grewal N."/>
            <person name="Goyea E."/>
            <person name="Hou S."/>
            <person name="Levy A."/>
            <person name="Martinka S."/>
            <person name="Mead K."/>
            <person name="McLellan M.D."/>
            <person name="Meyer R."/>
            <person name="Randall-Maher J."/>
            <person name="Tomlinson C."/>
            <person name="Dauphin-Kohlberg S."/>
            <person name="Kozlowicz-Reilly A."/>
            <person name="Shah N."/>
            <person name="Swearengen-Shahid S."/>
            <person name="Snider J."/>
            <person name="Strong J.T."/>
            <person name="Thompson J."/>
            <person name="Yoakum M."/>
            <person name="Leonard S."/>
            <person name="Pearman C."/>
            <person name="Trani L."/>
            <person name="Radionenko M."/>
            <person name="Waligorski J.E."/>
            <person name="Wang C."/>
            <person name="Rock S.M."/>
            <person name="Tin-Wollam A.-M."/>
            <person name="Maupin R."/>
            <person name="Latreille P."/>
            <person name="Wendl M.C."/>
            <person name="Yang S.-P."/>
            <person name="Pohl C."/>
            <person name="Wallis J.W."/>
            <person name="Spieth J."/>
            <person name="Bieri T.A."/>
            <person name="Berkowicz N."/>
            <person name="Nelson J.O."/>
            <person name="Osborne J."/>
            <person name="Ding L."/>
            <person name="Meyer R."/>
            <person name="Sabo A."/>
            <person name="Shotland Y."/>
            <person name="Sinha P."/>
            <person name="Wohldmann P.E."/>
            <person name="Cook L.L."/>
            <person name="Hickenbotham M.T."/>
            <person name="Eldred J."/>
            <person name="Williams D."/>
            <person name="Jones T.A."/>
            <person name="She X."/>
            <person name="Ciccarelli F.D."/>
            <person name="Izaurralde E."/>
            <person name="Taylor J."/>
            <person name="Schmutz J."/>
            <person name="Myers R.M."/>
            <person name="Cox D.R."/>
            <person name="Huang X."/>
            <person name="McPherson J.D."/>
            <person name="Mardis E.R."/>
            <person name="Clifton S.W."/>
            <person name="Warren W.C."/>
            <person name="Chinwalla A.T."/>
            <person name="Eddy S.R."/>
            <person name="Marra M.A."/>
            <person name="Ovcharenko I."/>
            <person name="Furey T.S."/>
            <person name="Miller W."/>
            <person name="Eichler E.E."/>
            <person name="Bork P."/>
            <person name="Suyama M."/>
            <person name="Torrents D."/>
            <person name="Waterston R.H."/>
            <person name="Wilson R.K."/>
        </authorList>
    </citation>
    <scope>NUCLEOTIDE SEQUENCE [LARGE SCALE GENOMIC DNA]</scope>
</reference>
<reference key="2">
    <citation type="submission" date="2000-11" db="EMBL/GenBank/DDBJ databases">
        <authorList>
            <consortium name="The Cancer Genome Anatomy Project (CGAP) at the National Cancer Institute"/>
        </authorList>
    </citation>
    <scope>NUCLEOTIDE SEQUENCE [LARGE SCALE MRNA] OF 1686-1758</scope>
</reference>
<reference key="3">
    <citation type="journal article" date="2005" name="Genome Res.">
        <title>Complex genomic rearrangements lead to novel primate gene function.</title>
        <authorList>
            <person name="Ciccarelli F.D."/>
            <person name="von Mering C."/>
            <person name="Suyama M."/>
            <person name="Harrington E.D."/>
            <person name="Izaurralde E."/>
            <person name="Bork P."/>
        </authorList>
    </citation>
    <scope>RANBP2 CLUSTER</scope>
</reference>
<protein>
    <recommendedName>
        <fullName>RanBP2-like and GRIP domain-containing protein 3</fullName>
    </recommendedName>
</protein>
<sequence length="1758" mass="197487">MSCSKAYGERYVASVQGSAPSPRKKSTRGFYFAKLYYEAKEYDLAKKYICTYINVREMDPRAHRFLGLLYELEENTEKAVECYRRSVELNPTQKDLVLKIAELLCKNDVTDGRAEYWVERAAKLFPGSPAIYKLKEQLLDCEGEDGWNKLFDLIQSELYVRPDDVHVNIRLVELYRSTKRLKDAVARCHEAERNIALRSSLEWNSCVVQTLKEYLESLQCLESDKSDWRATNTDLLLAYANLMLLTLSTRDVQESRELLESFDSALQSAKSSLGGNDELSATFLEMKGHFYMHAGSLLLKMGQHGNNVQWRALSELAALCYLIAFQVPRPKIKLIKGEAGQNLLEMMACDRLSQSGHMLLNLSRGKQDFLKVVVETFANKSGQSALYDALFSSQSPKDTSFLGSDDIGNIDVQEPELEDLARYDVGAIRAHNGSLQHLTWLGLQWNSLPALPGIRKWLKQLFHHLPQETSRLETNAPESICILDLEVFLLGVVYTSHLQLKEKCNSHHSSYQPLCLPLPVCKQLCTERQKSWWDAVCTLIHRKAVPGNSAKLRLLVQHEINTLRAQEKHGLQPALLVHWAKCLQKMGSGLNSFYDQREYIGRSVHYWKKVLPLLKIIKKKNSIPEPIDPLFKHFHSVDIQASEIVEYEEDAHVTFAILDAVNGNIEDAMTAFESIKSVVSYWNLALIFHRKAEDIANDALSPEEQEECKNYLRKTRGYLIKILDDSDSNLSVVKKLPVPLESVKEMLKSVMQELENYSEGGPLYKNGSLRNADSEIKHSTPSPTKYSLSPSKSYKYSPKTPPRWAEDQNSLLKMIRQEVKAIKEEMQELKLNSSKSASHHRWPTENYGPDSVPDGYQGSQTFHGAPLTVATTGPSVYYSQSPAYNSQYLLRPAANVTPTKGSSNTEFKSTKEGFSIPVSADGFKFGISEPGNQEKKSEKPLENDTGLQAQDISGRKKGRGVIFGQTSSTFTFADVAKSTSGEGFQFGKKDLNFKGFSGAGEKLFSSQYGKMANKANTSGDFEKDDDAYKTEDSDDIHFEPVVQMPEKVELVTGEEGEKVLYSQGVKLFRFDAEVSQWKERGLGNLKILKNEVNGKVRMLMQREQVLKVCANHWITTTMNLKPLSGSDRAWMWSASDFSDGDAKLERLAAKFKTPELAEEFKQKFEECQRLLLDIPLQTPHKLVDTGRAAKLIQRAEEMKSGLKDFKTFLTNDQTKVAEEENKGSGTGAAGASDTTIKPNAENTGPTLEWDNYDLREDALDDSVSSSSVHASPLASSPVRKNLFHFDESTTGSNFSFKSALSLSKSPAKLNQSGTSVGTDEESDVTQEEERDGQYFEPVVPLPDLVEVSSGEENEQVVFSHRAEFYRYDKDVGQWKERGIGDIKILQNYDNKHVRILMRRDQVLKLCANHRITPDMSLQNMKGTERVWVWTACDFADGERKVEHLAVRFKLQDVADSFKKIFDEAKTAQEKDSLITPHVSRSSTPRESPCGKIAVAVLEETTRERTDVIQGDDVADAASEVEVSSTSETTTKAVVSPPKFVFGSESVKRIFSSEKSKPFAFGNSSATGSLFGFSFNAPLKSNNSETSSVAQSGSESKVEPKKCELSKNSDIEQSSDSKVKNLSASFPTEESSINYTFKTPEKEPPLWYAEFTKEELVQKLSSTTKSADHLNGLLREIEATNAVLMEQIKLLKSEIRRLERNQEQEVSAANVEHLKNVLLQFIFLKPGSERERLLPVINTMLQLSLEEKGKLAAVAQGEE</sequence>
<feature type="chain" id="PRO_0000340666" description="RanBP2-like and GRIP domain-containing protein 3">
    <location>
        <begin position="1"/>
        <end position="1758"/>
    </location>
</feature>
<feature type="repeat" description="TPR 1">
    <location>
        <begin position="60"/>
        <end position="93"/>
    </location>
</feature>
<feature type="repeat" description="TPR 2">
    <location>
        <begin position="584"/>
        <end position="617"/>
    </location>
</feature>
<feature type="domain" description="RanBD1 1" evidence="3">
    <location>
        <begin position="1037"/>
        <end position="1173"/>
    </location>
</feature>
<feature type="domain" description="RanBD1 2" evidence="3">
    <location>
        <begin position="1334"/>
        <end position="1470"/>
    </location>
</feature>
<feature type="domain" description="GRIP" evidence="4">
    <location>
        <begin position="1703"/>
        <end position="1753"/>
    </location>
</feature>
<feature type="region of interest" description="Disordered" evidence="5">
    <location>
        <begin position="761"/>
        <end position="805"/>
    </location>
</feature>
<feature type="region of interest" description="Disordered" evidence="5">
    <location>
        <begin position="1216"/>
        <end position="1248"/>
    </location>
</feature>
<feature type="region of interest" description="Disordered" evidence="5">
    <location>
        <begin position="1307"/>
        <end position="1335"/>
    </location>
</feature>
<feature type="region of interest" description="Disordered" evidence="5">
    <location>
        <begin position="1581"/>
        <end position="1622"/>
    </location>
</feature>
<feature type="coiled-coil region" evidence="2">
    <location>
        <begin position="176"/>
        <end position="229"/>
    </location>
</feature>
<feature type="coiled-coil region" evidence="2">
    <location>
        <begin position="805"/>
        <end position="837"/>
    </location>
</feature>
<feature type="compositionally biased region" description="Low complexity" evidence="5">
    <location>
        <begin position="779"/>
        <end position="798"/>
    </location>
</feature>
<feature type="compositionally biased region" description="Polar residues" evidence="5">
    <location>
        <begin position="1236"/>
        <end position="1245"/>
    </location>
</feature>
<feature type="compositionally biased region" description="Acidic residues" evidence="5">
    <location>
        <begin position="1318"/>
        <end position="1330"/>
    </location>
</feature>
<feature type="compositionally biased region" description="Polar residues" evidence="5">
    <location>
        <begin position="1581"/>
        <end position="1594"/>
    </location>
</feature>
<feature type="compositionally biased region" description="Basic and acidic residues" evidence="5">
    <location>
        <begin position="1595"/>
        <end position="1618"/>
    </location>
</feature>
<feature type="modified residue" description="Phosphoserine" evidence="1">
    <location>
        <position position="21"/>
    </location>
</feature>